<protein>
    <recommendedName>
        <fullName>Flagellar biosynthetic protein FliP</fullName>
    </recommendedName>
</protein>
<feature type="chain" id="PRO_0000191990" description="Flagellar biosynthetic protein FliP">
    <location>
        <begin position="1"/>
        <end position="271"/>
    </location>
</feature>
<feature type="transmembrane region" description="Helical" evidence="2">
    <location>
        <begin position="11"/>
        <end position="31"/>
    </location>
</feature>
<feature type="transmembrane region" description="Helical" evidence="2">
    <location>
        <begin position="70"/>
        <end position="90"/>
    </location>
</feature>
<feature type="transmembrane region" description="Helical" evidence="2">
    <location>
        <begin position="113"/>
        <end position="133"/>
    </location>
</feature>
<feature type="transmembrane region" description="Helical" evidence="2">
    <location>
        <begin position="190"/>
        <end position="210"/>
    </location>
</feature>
<feature type="transmembrane region" description="Helical" evidence="2">
    <location>
        <begin position="212"/>
        <end position="232"/>
    </location>
</feature>
<feature type="transmembrane region" description="Helical" evidence="2">
    <location>
        <begin position="236"/>
        <end position="256"/>
    </location>
</feature>
<name>FLIP_TREPA</name>
<gene>
    <name type="primary">fliP</name>
    <name type="ordered locus">TP_0718</name>
</gene>
<comment type="function">
    <text evidence="1">Plays a role in the flagellum-specific transport system.</text>
</comment>
<comment type="subcellular location">
    <subcellularLocation>
        <location evidence="3">Cell membrane</location>
        <topology evidence="3">Multi-pass membrane protein</topology>
    </subcellularLocation>
    <subcellularLocation>
        <location evidence="1">Bacterial flagellum basal body</location>
    </subcellularLocation>
</comment>
<comment type="similarity">
    <text evidence="3">Belongs to the FliP/MopC/SpaP family.</text>
</comment>
<proteinExistence type="inferred from homology"/>
<keyword id="KW-0975">Bacterial flagellum</keyword>
<keyword id="KW-1005">Bacterial flagellum biogenesis</keyword>
<keyword id="KW-1006">Bacterial flagellum protein export</keyword>
<keyword id="KW-1003">Cell membrane</keyword>
<keyword id="KW-0472">Membrane</keyword>
<keyword id="KW-0653">Protein transport</keyword>
<keyword id="KW-1185">Reference proteome</keyword>
<keyword id="KW-0812">Transmembrane</keyword>
<keyword id="KW-1133">Transmembrane helix</keyword>
<keyword id="KW-0813">Transport</keyword>
<accession>P74930</accession>
<reference key="1">
    <citation type="journal article" date="1995" name="Gene">
        <title>Identification and sequences of the Treponema pallidum fliM', fliY, fliP, fliQ, fliR and flhB' genes.</title>
        <authorList>
            <person name="Hardham J.M."/>
            <person name="Frye J.G."/>
            <person name="Stamm L.V."/>
        </authorList>
    </citation>
    <scope>NUCLEOTIDE SEQUENCE [GENOMIC DNA]</scope>
    <source>
        <strain>Nichols</strain>
    </source>
</reference>
<reference key="2">
    <citation type="journal article" date="1998" name="Science">
        <title>Complete genome sequence of Treponema pallidum, the syphilis spirochete.</title>
        <authorList>
            <person name="Fraser C.M."/>
            <person name="Norris S.J."/>
            <person name="Weinstock G.M."/>
            <person name="White O."/>
            <person name="Sutton G.G."/>
            <person name="Dodson R.J."/>
            <person name="Gwinn M.L."/>
            <person name="Hickey E.K."/>
            <person name="Clayton R.A."/>
            <person name="Ketchum K.A."/>
            <person name="Sodergren E."/>
            <person name="Hardham J.M."/>
            <person name="McLeod M.P."/>
            <person name="Salzberg S.L."/>
            <person name="Peterson J.D."/>
            <person name="Khalak H.G."/>
            <person name="Richardson D.L."/>
            <person name="Howell J.K."/>
            <person name="Chidambaram M."/>
            <person name="Utterback T.R."/>
            <person name="McDonald L.A."/>
            <person name="Artiach P."/>
            <person name="Bowman C."/>
            <person name="Cotton M.D."/>
            <person name="Fujii C."/>
            <person name="Garland S.A."/>
            <person name="Hatch B."/>
            <person name="Horst K."/>
            <person name="Roberts K.M."/>
            <person name="Sandusky M."/>
            <person name="Weidman J.F."/>
            <person name="Smith H.O."/>
            <person name="Venter J.C."/>
        </authorList>
    </citation>
    <scope>NUCLEOTIDE SEQUENCE [LARGE SCALE GENOMIC DNA]</scope>
    <source>
        <strain>Nichols</strain>
    </source>
</reference>
<dbReference type="EMBL" id="U36839">
    <property type="protein sequence ID" value="AAB00546.1"/>
    <property type="molecule type" value="Genomic_DNA"/>
</dbReference>
<dbReference type="EMBL" id="AE000520">
    <property type="protein sequence ID" value="AAC65684.1"/>
    <property type="molecule type" value="Genomic_DNA"/>
</dbReference>
<dbReference type="PIR" id="JC4507">
    <property type="entry name" value="JC4507"/>
</dbReference>
<dbReference type="RefSeq" id="WP_010882163.1">
    <property type="nucleotide sequence ID" value="NC_021490.2"/>
</dbReference>
<dbReference type="SMR" id="P74930"/>
<dbReference type="STRING" id="243276.TP_0718"/>
<dbReference type="EnsemblBacteria" id="AAC65684">
    <property type="protein sequence ID" value="AAC65684"/>
    <property type="gene ID" value="TP_0718"/>
</dbReference>
<dbReference type="GeneID" id="93876487"/>
<dbReference type="KEGG" id="tpa:TP_0718"/>
<dbReference type="KEGG" id="tpw:TPANIC_0718"/>
<dbReference type="eggNOG" id="COG1338">
    <property type="taxonomic scope" value="Bacteria"/>
</dbReference>
<dbReference type="HOGENOM" id="CLU_042028_1_0_12"/>
<dbReference type="OrthoDB" id="9805111at2"/>
<dbReference type="Proteomes" id="UP000000811">
    <property type="component" value="Chromosome"/>
</dbReference>
<dbReference type="GO" id="GO:0009425">
    <property type="term" value="C:bacterial-type flagellum basal body"/>
    <property type="evidence" value="ECO:0007669"/>
    <property type="project" value="UniProtKB-SubCell"/>
</dbReference>
<dbReference type="GO" id="GO:0005886">
    <property type="term" value="C:plasma membrane"/>
    <property type="evidence" value="ECO:0007669"/>
    <property type="project" value="UniProtKB-SubCell"/>
</dbReference>
<dbReference type="GO" id="GO:0044781">
    <property type="term" value="P:bacterial-type flagellum organization"/>
    <property type="evidence" value="ECO:0007669"/>
    <property type="project" value="UniProtKB-KW"/>
</dbReference>
<dbReference type="GO" id="GO:0009306">
    <property type="term" value="P:protein secretion"/>
    <property type="evidence" value="ECO:0007669"/>
    <property type="project" value="InterPro"/>
</dbReference>
<dbReference type="InterPro" id="IPR005837">
    <property type="entry name" value="FliP"/>
</dbReference>
<dbReference type="InterPro" id="IPR005838">
    <property type="entry name" value="T3SS_IM_P"/>
</dbReference>
<dbReference type="NCBIfam" id="TIGR01103">
    <property type="entry name" value="fliP"/>
    <property type="match status" value="1"/>
</dbReference>
<dbReference type="NCBIfam" id="NF009438">
    <property type="entry name" value="PRK12797.1"/>
    <property type="match status" value="1"/>
</dbReference>
<dbReference type="PANTHER" id="PTHR30587">
    <property type="entry name" value="FLAGELLAR BIOSYNTHETIC PROTEIN FLIP"/>
    <property type="match status" value="1"/>
</dbReference>
<dbReference type="PANTHER" id="PTHR30587:SF0">
    <property type="entry name" value="FLAGELLAR BIOSYNTHETIC PROTEIN FLIP"/>
    <property type="match status" value="1"/>
</dbReference>
<dbReference type="Pfam" id="PF00813">
    <property type="entry name" value="FliP"/>
    <property type="match status" value="1"/>
</dbReference>
<dbReference type="PRINTS" id="PR00951">
    <property type="entry name" value="FLGBIOSNFLIP"/>
</dbReference>
<dbReference type="PRINTS" id="PR01302">
    <property type="entry name" value="TYPE3IMPPROT"/>
</dbReference>
<dbReference type="PROSITE" id="PS01060">
    <property type="entry name" value="FLIP_1"/>
    <property type="match status" value="1"/>
</dbReference>
<dbReference type="PROSITE" id="PS01061">
    <property type="entry name" value="FLIP_2"/>
    <property type="match status" value="1"/>
</dbReference>
<sequence>MIRARACVRRALFFVSLFFFPLFAQDARGGVERGVTGINAERPASRIPFINFDIREPQTNREVAFSVQLLLLLTLISLAPSILLLMTAFLRLSIVLDFIKRALSLQQVPPTQVLHGIALFLALFIMWPVFTEIYAKSFKPLTDGQVDIQTAYTEAERPLRVFMYRQMAHDPSSVRLCMSMAKLPKPDTLADVPTYVLIPAFILHELTVAFQIGIFLYLPFIIVDMVVASILMSMGMIMLPPVQISLPFKLVLFVLVDGWNLLIDRLFHSFL</sequence>
<organism>
    <name type="scientific">Treponema pallidum (strain Nichols)</name>
    <dbReference type="NCBI Taxonomy" id="243276"/>
    <lineage>
        <taxon>Bacteria</taxon>
        <taxon>Pseudomonadati</taxon>
        <taxon>Spirochaetota</taxon>
        <taxon>Spirochaetia</taxon>
        <taxon>Spirochaetales</taxon>
        <taxon>Treponemataceae</taxon>
        <taxon>Treponema</taxon>
    </lineage>
</organism>
<evidence type="ECO:0000250" key="1"/>
<evidence type="ECO:0000255" key="2"/>
<evidence type="ECO:0000305" key="3"/>